<sequence>MLRFLNQCSQGRGAWLLMAFTALALELTALWFQHVMLLKPCVLCIYERCALFGVLGAALIGAIAPKTPLRYVAMVIWLYSAFRGVQLTYEHTMLQLYPSPFATCDFMARFPEWLPLDKWVPQVFVASGDCAERQWEFLGLEMPQWLLGIFIAYLIVAVLVVISQPFKAKKRDLFGR</sequence>
<reference key="1">
    <citation type="journal article" date="2007" name="J. Bacteriol.">
        <title>The genome sequence of avian pathogenic Escherichia coli strain O1:K1:H7 shares strong similarities with human extraintestinal pathogenic E. coli genomes.</title>
        <authorList>
            <person name="Johnson T.J."/>
            <person name="Kariyawasam S."/>
            <person name="Wannemuehler Y."/>
            <person name="Mangiamele P."/>
            <person name="Johnson S.J."/>
            <person name="Doetkott C."/>
            <person name="Skyberg J.A."/>
            <person name="Lynne A.M."/>
            <person name="Johnson J.R."/>
            <person name="Nolan L.K."/>
        </authorList>
    </citation>
    <scope>NUCLEOTIDE SEQUENCE [LARGE SCALE GENOMIC DNA]</scope>
</reference>
<proteinExistence type="inferred from homology"/>
<gene>
    <name evidence="1" type="primary">dsbB</name>
    <name type="ordered locus">Ecok1_11040</name>
    <name type="ORF">APECO1_297</name>
</gene>
<keyword id="KW-0997">Cell inner membrane</keyword>
<keyword id="KW-1003">Cell membrane</keyword>
<keyword id="KW-0143">Chaperone</keyword>
<keyword id="KW-1015">Disulfide bond</keyword>
<keyword id="KW-0249">Electron transport</keyword>
<keyword id="KW-0472">Membrane</keyword>
<keyword id="KW-0560">Oxidoreductase</keyword>
<keyword id="KW-0676">Redox-active center</keyword>
<keyword id="KW-1185">Reference proteome</keyword>
<keyword id="KW-0812">Transmembrane</keyword>
<keyword id="KW-1133">Transmembrane helix</keyword>
<keyword id="KW-0813">Transport</keyword>
<feature type="chain" id="PRO_0000298358" description="Disulfide bond formation protein B">
    <location>
        <begin position="1"/>
        <end position="176"/>
    </location>
</feature>
<feature type="topological domain" description="Cytoplasmic" evidence="1">
    <location>
        <begin position="1"/>
        <end position="14"/>
    </location>
</feature>
<feature type="transmembrane region" description="Helical" evidence="1">
    <location>
        <begin position="15"/>
        <end position="31"/>
    </location>
</feature>
<feature type="topological domain" description="Periplasmic" evidence="1">
    <location>
        <begin position="32"/>
        <end position="49"/>
    </location>
</feature>
<feature type="transmembrane region" description="Helical" evidence="1">
    <location>
        <begin position="50"/>
        <end position="65"/>
    </location>
</feature>
<feature type="topological domain" description="Cytoplasmic" evidence="1">
    <location>
        <begin position="66"/>
        <end position="71"/>
    </location>
</feature>
<feature type="transmembrane region" description="Helical" evidence="1">
    <location>
        <begin position="72"/>
        <end position="89"/>
    </location>
</feature>
<feature type="topological domain" description="Periplasmic" evidence="1">
    <location>
        <begin position="90"/>
        <end position="144"/>
    </location>
</feature>
<feature type="transmembrane region" description="Helical" evidence="1">
    <location>
        <begin position="145"/>
        <end position="163"/>
    </location>
</feature>
<feature type="topological domain" description="Cytoplasmic" evidence="1">
    <location>
        <begin position="164"/>
        <end position="176"/>
    </location>
</feature>
<feature type="disulfide bond" description="Redox-active" evidence="1">
    <location>
        <begin position="41"/>
        <end position="44"/>
    </location>
</feature>
<feature type="disulfide bond" description="Redox-active" evidence="1">
    <location>
        <begin position="104"/>
        <end position="130"/>
    </location>
</feature>
<accession>A1AAA8</accession>
<comment type="function">
    <text evidence="1">Required for disulfide bond formation in some periplasmic proteins. Acts by oxidizing the DsbA protein.</text>
</comment>
<comment type="subcellular location">
    <subcellularLocation>
        <location evidence="1">Cell inner membrane</location>
        <topology evidence="1">Multi-pass membrane protein</topology>
    </subcellularLocation>
</comment>
<comment type="similarity">
    <text evidence="1">Belongs to the DsbB family.</text>
</comment>
<comment type="sequence caution" evidence="2">
    <conflict type="erroneous initiation">
        <sequence resource="EMBL-CDS" id="ABJ00598"/>
    </conflict>
</comment>
<dbReference type="EMBL" id="CP000468">
    <property type="protein sequence ID" value="ABJ00598.1"/>
    <property type="status" value="ALT_INIT"/>
    <property type="molecule type" value="Genomic_DNA"/>
</dbReference>
<dbReference type="RefSeq" id="WP_000943452.1">
    <property type="nucleotide sequence ID" value="NZ_CADILS010000001.1"/>
</dbReference>
<dbReference type="BMRB" id="A1AAA8"/>
<dbReference type="SMR" id="A1AAA8"/>
<dbReference type="KEGG" id="ecv:APECO1_297"/>
<dbReference type="HOGENOM" id="CLU_098660_2_0_6"/>
<dbReference type="Proteomes" id="UP000008216">
    <property type="component" value="Chromosome"/>
</dbReference>
<dbReference type="GO" id="GO:0005886">
    <property type="term" value="C:plasma membrane"/>
    <property type="evidence" value="ECO:0007669"/>
    <property type="project" value="UniProtKB-SubCell"/>
</dbReference>
<dbReference type="GO" id="GO:0009055">
    <property type="term" value="F:electron transfer activity"/>
    <property type="evidence" value="ECO:0007669"/>
    <property type="project" value="UniProtKB-UniRule"/>
</dbReference>
<dbReference type="GO" id="GO:0015035">
    <property type="term" value="F:protein-disulfide reductase activity"/>
    <property type="evidence" value="ECO:0007669"/>
    <property type="project" value="UniProtKB-UniRule"/>
</dbReference>
<dbReference type="GO" id="GO:0006457">
    <property type="term" value="P:protein folding"/>
    <property type="evidence" value="ECO:0007669"/>
    <property type="project" value="InterPro"/>
</dbReference>
<dbReference type="FunFam" id="1.20.1550.10:FF:000001">
    <property type="entry name" value="Disulfide bond formation protein B"/>
    <property type="match status" value="1"/>
</dbReference>
<dbReference type="Gene3D" id="1.20.1550.10">
    <property type="entry name" value="DsbB-like"/>
    <property type="match status" value="1"/>
</dbReference>
<dbReference type="HAMAP" id="MF_00286">
    <property type="entry name" value="DsbB"/>
    <property type="match status" value="1"/>
</dbReference>
<dbReference type="InterPro" id="IPR003752">
    <property type="entry name" value="DiS_bond_form_DsbB/BdbC"/>
</dbReference>
<dbReference type="InterPro" id="IPR022920">
    <property type="entry name" value="Disulphide_bond_form_DsbB"/>
</dbReference>
<dbReference type="InterPro" id="IPR050183">
    <property type="entry name" value="DsbB"/>
</dbReference>
<dbReference type="InterPro" id="IPR023380">
    <property type="entry name" value="DsbB-like_sf"/>
</dbReference>
<dbReference type="NCBIfam" id="NF002485">
    <property type="entry name" value="PRK01749.1"/>
    <property type="match status" value="1"/>
</dbReference>
<dbReference type="PANTHER" id="PTHR36570">
    <property type="entry name" value="DISULFIDE BOND FORMATION PROTEIN B"/>
    <property type="match status" value="1"/>
</dbReference>
<dbReference type="PANTHER" id="PTHR36570:SF2">
    <property type="entry name" value="DISULFIDE BOND FORMATION PROTEIN B"/>
    <property type="match status" value="1"/>
</dbReference>
<dbReference type="Pfam" id="PF02600">
    <property type="entry name" value="DsbB"/>
    <property type="match status" value="1"/>
</dbReference>
<dbReference type="SUPFAM" id="SSF158442">
    <property type="entry name" value="DsbB-like"/>
    <property type="match status" value="1"/>
</dbReference>
<evidence type="ECO:0000255" key="1">
    <source>
        <dbReference type="HAMAP-Rule" id="MF_00286"/>
    </source>
</evidence>
<evidence type="ECO:0000305" key="2"/>
<organism>
    <name type="scientific">Escherichia coli O1:K1 / APEC</name>
    <dbReference type="NCBI Taxonomy" id="405955"/>
    <lineage>
        <taxon>Bacteria</taxon>
        <taxon>Pseudomonadati</taxon>
        <taxon>Pseudomonadota</taxon>
        <taxon>Gammaproteobacteria</taxon>
        <taxon>Enterobacterales</taxon>
        <taxon>Enterobacteriaceae</taxon>
        <taxon>Escherichia</taxon>
    </lineage>
</organism>
<protein>
    <recommendedName>
        <fullName evidence="1">Disulfide bond formation protein B</fullName>
    </recommendedName>
    <alternativeName>
        <fullName evidence="1">Disulfide oxidoreductase</fullName>
    </alternativeName>
</protein>
<name>DSBB_ECOK1</name>